<name>UREF_STAES</name>
<sequence>MIDHQHLRLFQFCDSQFPTGAFSHSFGLETYIQRETVHDTETFIKWLHLFINEQLTYSDGIAMRIVYHALINNDKDKILDINQKLFVQNLPKETRIGAKQMGTRMVKLALDLYDSEWIQWYYNQMKNNKIKLHPAVCFTMLGHFLGVDVESIIDYYLYQNISSLTQNAVRAIPLGQTAGQQVVTEMIAHIEKTRNHILELDEIDFGMTAPGLELNQMEHENVHVRIFIS</sequence>
<feature type="chain" id="PRO_0000344193" description="Urease accessory protein UreF">
    <location>
        <begin position="1"/>
        <end position="229"/>
    </location>
</feature>
<gene>
    <name evidence="1" type="primary">ureF</name>
    <name type="ordered locus">SE_1865</name>
</gene>
<protein>
    <recommendedName>
        <fullName evidence="1">Urease accessory protein UreF</fullName>
    </recommendedName>
</protein>
<organism>
    <name type="scientific">Staphylococcus epidermidis (strain ATCC 12228 / FDA PCI 1200)</name>
    <dbReference type="NCBI Taxonomy" id="176280"/>
    <lineage>
        <taxon>Bacteria</taxon>
        <taxon>Bacillati</taxon>
        <taxon>Bacillota</taxon>
        <taxon>Bacilli</taxon>
        <taxon>Bacillales</taxon>
        <taxon>Staphylococcaceae</taxon>
        <taxon>Staphylococcus</taxon>
    </lineage>
</organism>
<accession>Q8CNC7</accession>
<reference key="1">
    <citation type="journal article" date="2003" name="Mol. Microbiol.">
        <title>Genome-based analysis of virulence genes in a non-biofilm-forming Staphylococcus epidermidis strain (ATCC 12228).</title>
        <authorList>
            <person name="Zhang Y.-Q."/>
            <person name="Ren S.-X."/>
            <person name="Li H.-L."/>
            <person name="Wang Y.-X."/>
            <person name="Fu G."/>
            <person name="Yang J."/>
            <person name="Qin Z.-Q."/>
            <person name="Miao Y.-G."/>
            <person name="Wang W.-Y."/>
            <person name="Chen R.-S."/>
            <person name="Shen Y."/>
            <person name="Chen Z."/>
            <person name="Yuan Z.-H."/>
            <person name="Zhao G.-P."/>
            <person name="Qu D."/>
            <person name="Danchin A."/>
            <person name="Wen Y.-M."/>
        </authorList>
    </citation>
    <scope>NUCLEOTIDE SEQUENCE [LARGE SCALE GENOMIC DNA]</scope>
    <source>
        <strain>ATCC 12228 / FDA PCI 1200</strain>
    </source>
</reference>
<evidence type="ECO:0000255" key="1">
    <source>
        <dbReference type="HAMAP-Rule" id="MF_01385"/>
    </source>
</evidence>
<dbReference type="EMBL" id="AE015929">
    <property type="protein sequence ID" value="AAO05506.1"/>
    <property type="molecule type" value="Genomic_DNA"/>
</dbReference>
<dbReference type="RefSeq" id="NP_765420.1">
    <property type="nucleotide sequence ID" value="NC_004461.1"/>
</dbReference>
<dbReference type="RefSeq" id="WP_001832407.1">
    <property type="nucleotide sequence ID" value="NZ_WBME01000034.1"/>
</dbReference>
<dbReference type="SMR" id="Q8CNC7"/>
<dbReference type="KEGG" id="sep:SE_1865"/>
<dbReference type="PATRIC" id="fig|176280.10.peg.1822"/>
<dbReference type="eggNOG" id="COG0830">
    <property type="taxonomic scope" value="Bacteria"/>
</dbReference>
<dbReference type="HOGENOM" id="CLU_049215_4_2_9"/>
<dbReference type="OrthoDB" id="9798772at2"/>
<dbReference type="Proteomes" id="UP000001411">
    <property type="component" value="Chromosome"/>
</dbReference>
<dbReference type="GO" id="GO:0005737">
    <property type="term" value="C:cytoplasm"/>
    <property type="evidence" value="ECO:0007669"/>
    <property type="project" value="UniProtKB-SubCell"/>
</dbReference>
<dbReference type="GO" id="GO:0016151">
    <property type="term" value="F:nickel cation binding"/>
    <property type="evidence" value="ECO:0007669"/>
    <property type="project" value="UniProtKB-UniRule"/>
</dbReference>
<dbReference type="Gene3D" id="1.10.4190.10">
    <property type="entry name" value="Urease accessory protein UreF"/>
    <property type="match status" value="1"/>
</dbReference>
<dbReference type="HAMAP" id="MF_01385">
    <property type="entry name" value="UreF"/>
    <property type="match status" value="1"/>
</dbReference>
<dbReference type="InterPro" id="IPR002639">
    <property type="entry name" value="UreF"/>
</dbReference>
<dbReference type="InterPro" id="IPR038277">
    <property type="entry name" value="UreF_sf"/>
</dbReference>
<dbReference type="PANTHER" id="PTHR33620">
    <property type="entry name" value="UREASE ACCESSORY PROTEIN F"/>
    <property type="match status" value="1"/>
</dbReference>
<dbReference type="PANTHER" id="PTHR33620:SF1">
    <property type="entry name" value="UREASE ACCESSORY PROTEIN F"/>
    <property type="match status" value="1"/>
</dbReference>
<dbReference type="Pfam" id="PF01730">
    <property type="entry name" value="UreF"/>
    <property type="match status" value="1"/>
</dbReference>
<dbReference type="PIRSF" id="PIRSF009467">
    <property type="entry name" value="Ureas_acces_UreF"/>
    <property type="match status" value="1"/>
</dbReference>
<keyword id="KW-0143">Chaperone</keyword>
<keyword id="KW-0963">Cytoplasm</keyword>
<keyword id="KW-0996">Nickel insertion</keyword>
<proteinExistence type="inferred from homology"/>
<comment type="function">
    <text evidence="1">Required for maturation of urease via the functional incorporation of the urease nickel metallocenter.</text>
</comment>
<comment type="subunit">
    <text evidence="1">UreD, UreF and UreG form a complex that acts as a GTP-hydrolysis-dependent molecular chaperone, activating the urease apoprotein by helping to assemble the nickel containing metallocenter of UreC. The UreE protein probably delivers the nickel.</text>
</comment>
<comment type="subcellular location">
    <subcellularLocation>
        <location evidence="1">Cytoplasm</location>
    </subcellularLocation>
</comment>
<comment type="similarity">
    <text evidence="1">Belongs to the UreF family.</text>
</comment>